<accession>P0DI47</accession>
<proteinExistence type="evidence at transcript level"/>
<evidence type="ECO:0000250" key="1"/>
<evidence type="ECO:0000255" key="2"/>
<evidence type="ECO:0000305" key="3"/>
<sequence>MKNESTFIDVPADSSSAMKGKAPLIGVAKDHTASGSGGYNRGLSIFDFLLRLAAIVAASVAAGTMFTSDETLPFFTQFLQFQAGYDDLPTFQFFVISMSLVSGYIVLSLPISVVTIVRPLAAAPRLLLLVLDTAVMGLTMAAASSAAAISYVAHNGNQNTNWLPICQQFGDFCQKTSGGCGLFLCRRRVFHDPGCPLRSRSQRH</sequence>
<comment type="function">
    <text evidence="1">Regulates membrane-cell wall junctions and localized cell wall deposition. Required for establishment of the Casparian strip membrane domain (CSD) and the subsequent formation of Casparian strips, a cell wall modification of the root endodermis that determines an apoplastic barrier between the intraorganismal apoplasm and the extraorganismal apoplasm and prevents lateral diffusion (By similarity).</text>
</comment>
<comment type="subunit">
    <text evidence="1">Homodimer and heterodimers.</text>
</comment>
<comment type="subcellular location">
    <subcellularLocation>
        <location evidence="1">Cell membrane</location>
        <topology evidence="1">Multi-pass membrane protein</topology>
    </subcellularLocation>
    <text evidence="1">Very restricted localization following a belt shape within the plasma membrane which coincides with the position of the Casparian strip membrane domain in the root endodermis.</text>
</comment>
<comment type="similarity">
    <text evidence="3">Belongs to the Casparian strip membrane proteins (CASP) family.</text>
</comment>
<organism>
    <name type="scientific">Raphanus sativus</name>
    <name type="common">Radish</name>
    <name type="synonym">Raphanus raphanistrum var. sativus</name>
    <dbReference type="NCBI Taxonomy" id="3726"/>
    <lineage>
        <taxon>Eukaryota</taxon>
        <taxon>Viridiplantae</taxon>
        <taxon>Streptophyta</taxon>
        <taxon>Embryophyta</taxon>
        <taxon>Tracheophyta</taxon>
        <taxon>Spermatophyta</taxon>
        <taxon>Magnoliopsida</taxon>
        <taxon>eudicotyledons</taxon>
        <taxon>Gunneridae</taxon>
        <taxon>Pentapetalae</taxon>
        <taxon>rosids</taxon>
        <taxon>malvids</taxon>
        <taxon>Brassicales</taxon>
        <taxon>Brassicaceae</taxon>
        <taxon>Brassiceae</taxon>
        <taxon>Raphanus</taxon>
    </lineage>
</organism>
<keyword id="KW-1003">Cell membrane</keyword>
<keyword id="KW-0961">Cell wall biogenesis/degradation</keyword>
<keyword id="KW-0472">Membrane</keyword>
<keyword id="KW-1185">Reference proteome</keyword>
<keyword id="KW-0812">Transmembrane</keyword>
<keyword id="KW-1133">Transmembrane helix</keyword>
<reference key="1">
    <citation type="submission" date="2007-12" db="EMBL/GenBank/DDBJ databases">
        <title>Comparative cDNA sequencing in radish (Raphanus), a crop, weed, and model system in ecology and evolution.</title>
        <authorList>
            <person name="Conner J.K."/>
            <person name="Shiu S.H."/>
            <person name="Xiao Y."/>
        </authorList>
    </citation>
    <scope>NUCLEOTIDE SEQUENCE [LARGE SCALE MRNA]</scope>
    <source>
        <tissue>Seedling</tissue>
    </source>
</reference>
<reference key="2">
    <citation type="journal article" date="2014" name="Plant Physiol.">
        <title>Functional and evolutionary analysis of the CASPARIAN STRIP MEMBRANE DOMAIN PROTEIN family.</title>
        <authorList>
            <person name="Roppolo D."/>
            <person name="Boeckmann B."/>
            <person name="Pfister A."/>
            <person name="Boutet E."/>
            <person name="Rubio M.C."/>
            <person name="Denervaud-Tendon V."/>
            <person name="Vermeer J.E."/>
            <person name="Gheyselinck J."/>
            <person name="Xenarios I."/>
            <person name="Geldner N."/>
        </authorList>
    </citation>
    <scope>GENE FAMILY</scope>
    <scope>NOMENCLATURE</scope>
</reference>
<feature type="chain" id="PRO_0000417804" description="Casparian strip membrane protein 3">
    <location>
        <begin position="1"/>
        <end position="204"/>
    </location>
</feature>
<feature type="topological domain" description="Cytoplasmic" evidence="2">
    <location>
        <begin position="1"/>
        <end position="41"/>
    </location>
</feature>
<feature type="transmembrane region" description="Helical" evidence="2">
    <location>
        <begin position="42"/>
        <end position="62"/>
    </location>
</feature>
<feature type="topological domain" description="Extracellular" evidence="2">
    <location>
        <begin position="63"/>
        <end position="92"/>
    </location>
</feature>
<feature type="transmembrane region" description="Helical" evidence="2">
    <location>
        <begin position="93"/>
        <end position="113"/>
    </location>
</feature>
<feature type="topological domain" description="Cytoplasmic" evidence="2">
    <location>
        <begin position="114"/>
        <end position="125"/>
    </location>
</feature>
<feature type="transmembrane region" description="Helical" evidence="2">
    <location>
        <begin position="126"/>
        <end position="146"/>
    </location>
</feature>
<feature type="topological domain" description="Extracellular" evidence="2">
    <location>
        <begin position="147"/>
        <end position="204"/>
    </location>
</feature>
<name>CASP3_RAPSA</name>
<protein>
    <recommendedName>
        <fullName>Casparian strip membrane protein 3</fullName>
        <shortName>RsCASP3</shortName>
    </recommendedName>
</protein>
<dbReference type="EMBL" id="EY946275">
    <property type="status" value="NOT_ANNOTATED_CDS"/>
    <property type="molecule type" value="mRNA"/>
</dbReference>
<dbReference type="Proteomes" id="UP000504610">
    <property type="component" value="Unplaced"/>
</dbReference>
<dbReference type="GO" id="GO:0005886">
    <property type="term" value="C:plasma membrane"/>
    <property type="evidence" value="ECO:0007669"/>
    <property type="project" value="UniProtKB-SubCell"/>
</dbReference>
<dbReference type="GO" id="GO:0071555">
    <property type="term" value="P:cell wall organization"/>
    <property type="evidence" value="ECO:0007669"/>
    <property type="project" value="UniProtKB-KW"/>
</dbReference>
<dbReference type="InterPro" id="IPR006459">
    <property type="entry name" value="CASP/CASPL"/>
</dbReference>
<dbReference type="InterPro" id="IPR006702">
    <property type="entry name" value="CASP_dom"/>
</dbReference>
<dbReference type="InterPro" id="IPR044173">
    <property type="entry name" value="CASPL"/>
</dbReference>
<dbReference type="NCBIfam" id="TIGR01569">
    <property type="entry name" value="A_tha_TIGR01569"/>
    <property type="match status" value="1"/>
</dbReference>
<dbReference type="PANTHER" id="PTHR36488:SF11">
    <property type="entry name" value="CASP-LIKE PROTEIN"/>
    <property type="match status" value="1"/>
</dbReference>
<dbReference type="PANTHER" id="PTHR36488">
    <property type="entry name" value="CASP-LIKE PROTEIN 1U1"/>
    <property type="match status" value="1"/>
</dbReference>
<dbReference type="Pfam" id="PF04535">
    <property type="entry name" value="CASP_dom"/>
    <property type="match status" value="1"/>
</dbReference>